<accession>Q8K9T1</accession>
<dbReference type="EC" id="3.4.11.18" evidence="1"/>
<dbReference type="EMBL" id="AE013218">
    <property type="protein sequence ID" value="AAM67783.1"/>
    <property type="molecule type" value="Genomic_DNA"/>
</dbReference>
<dbReference type="RefSeq" id="WP_011053750.1">
    <property type="nucleotide sequence ID" value="NC_004061.1"/>
</dbReference>
<dbReference type="SMR" id="Q8K9T1"/>
<dbReference type="STRING" id="198804.BUsg_224"/>
<dbReference type="MEROPS" id="M24.001"/>
<dbReference type="GeneID" id="93003690"/>
<dbReference type="KEGG" id="bas:BUsg_224"/>
<dbReference type="eggNOG" id="COG0024">
    <property type="taxonomic scope" value="Bacteria"/>
</dbReference>
<dbReference type="HOGENOM" id="CLU_015857_0_0_6"/>
<dbReference type="Proteomes" id="UP000000416">
    <property type="component" value="Chromosome"/>
</dbReference>
<dbReference type="GO" id="GO:0005829">
    <property type="term" value="C:cytosol"/>
    <property type="evidence" value="ECO:0007669"/>
    <property type="project" value="TreeGrafter"/>
</dbReference>
<dbReference type="GO" id="GO:0004239">
    <property type="term" value="F:initiator methionyl aminopeptidase activity"/>
    <property type="evidence" value="ECO:0007669"/>
    <property type="project" value="UniProtKB-UniRule"/>
</dbReference>
<dbReference type="GO" id="GO:0046872">
    <property type="term" value="F:metal ion binding"/>
    <property type="evidence" value="ECO:0007669"/>
    <property type="project" value="UniProtKB-UniRule"/>
</dbReference>
<dbReference type="GO" id="GO:0070006">
    <property type="term" value="F:metalloaminopeptidase activity"/>
    <property type="evidence" value="ECO:0007669"/>
    <property type="project" value="UniProtKB-UniRule"/>
</dbReference>
<dbReference type="GO" id="GO:0006508">
    <property type="term" value="P:proteolysis"/>
    <property type="evidence" value="ECO:0007669"/>
    <property type="project" value="UniProtKB-KW"/>
</dbReference>
<dbReference type="CDD" id="cd01086">
    <property type="entry name" value="MetAP1"/>
    <property type="match status" value="1"/>
</dbReference>
<dbReference type="Gene3D" id="3.90.230.10">
    <property type="entry name" value="Creatinase/methionine aminopeptidase superfamily"/>
    <property type="match status" value="1"/>
</dbReference>
<dbReference type="HAMAP" id="MF_01974">
    <property type="entry name" value="MetAP_1"/>
    <property type="match status" value="1"/>
</dbReference>
<dbReference type="InterPro" id="IPR036005">
    <property type="entry name" value="Creatinase/aminopeptidase-like"/>
</dbReference>
<dbReference type="InterPro" id="IPR000994">
    <property type="entry name" value="Pept_M24"/>
</dbReference>
<dbReference type="InterPro" id="IPR001714">
    <property type="entry name" value="Pept_M24_MAP"/>
</dbReference>
<dbReference type="InterPro" id="IPR002467">
    <property type="entry name" value="Pept_M24A_MAP1"/>
</dbReference>
<dbReference type="NCBIfam" id="TIGR00500">
    <property type="entry name" value="met_pdase_I"/>
    <property type="match status" value="1"/>
</dbReference>
<dbReference type="PANTHER" id="PTHR43330">
    <property type="entry name" value="METHIONINE AMINOPEPTIDASE"/>
    <property type="match status" value="1"/>
</dbReference>
<dbReference type="PANTHER" id="PTHR43330:SF27">
    <property type="entry name" value="METHIONINE AMINOPEPTIDASE"/>
    <property type="match status" value="1"/>
</dbReference>
<dbReference type="Pfam" id="PF00557">
    <property type="entry name" value="Peptidase_M24"/>
    <property type="match status" value="1"/>
</dbReference>
<dbReference type="PRINTS" id="PR00599">
    <property type="entry name" value="MAPEPTIDASE"/>
</dbReference>
<dbReference type="SUPFAM" id="SSF55920">
    <property type="entry name" value="Creatinase/aminopeptidase"/>
    <property type="match status" value="1"/>
</dbReference>
<dbReference type="PROSITE" id="PS00680">
    <property type="entry name" value="MAP_1"/>
    <property type="match status" value="1"/>
</dbReference>
<protein>
    <recommendedName>
        <fullName evidence="1">Methionine aminopeptidase</fullName>
        <shortName evidence="1">MAP</shortName>
        <shortName evidence="1">MetAP</shortName>
        <ecNumber evidence="1">3.4.11.18</ecNumber>
    </recommendedName>
    <alternativeName>
        <fullName evidence="1">Peptidase M</fullName>
    </alternativeName>
</protein>
<keyword id="KW-0031">Aminopeptidase</keyword>
<keyword id="KW-0378">Hydrolase</keyword>
<keyword id="KW-0479">Metal-binding</keyword>
<keyword id="KW-0645">Protease</keyword>
<comment type="function">
    <text evidence="1">Removes the N-terminal methionine from nascent proteins. The N-terminal methionine is often cleaved when the second residue in the primary sequence is small and uncharged (Met-Ala-, Cys, Gly, Pro, Ser, Thr, or Val). Requires deformylation of the N(alpha)-formylated initiator methionine before it can be hydrolyzed.</text>
</comment>
<comment type="catalytic activity">
    <reaction evidence="1">
        <text>Release of N-terminal amino acids, preferentially methionine, from peptides and arylamides.</text>
        <dbReference type="EC" id="3.4.11.18"/>
    </reaction>
</comment>
<comment type="cofactor">
    <cofactor evidence="1">
        <name>Co(2+)</name>
        <dbReference type="ChEBI" id="CHEBI:48828"/>
    </cofactor>
    <cofactor evidence="1">
        <name>Zn(2+)</name>
        <dbReference type="ChEBI" id="CHEBI:29105"/>
    </cofactor>
    <cofactor evidence="1">
        <name>Mn(2+)</name>
        <dbReference type="ChEBI" id="CHEBI:29035"/>
    </cofactor>
    <cofactor evidence="1">
        <name>Fe(2+)</name>
        <dbReference type="ChEBI" id="CHEBI:29033"/>
    </cofactor>
    <text evidence="1">Binds 2 divalent metal cations per subunit. Has a high-affinity and a low affinity metal-binding site. The true nature of the physiological cofactor is under debate. The enzyme is active with cobalt, zinc, manganese or divalent iron ions. Most likely, methionine aminopeptidases function as mononuclear Fe(2+)-metalloproteases under physiological conditions, and the catalytically relevant metal-binding site has been assigned to the histidine-containing high-affinity site.</text>
</comment>
<comment type="subunit">
    <text evidence="1">Monomer.</text>
</comment>
<comment type="similarity">
    <text evidence="1">Belongs to the peptidase M24A family. Methionine aminopeptidase type 1 subfamily.</text>
</comment>
<sequence>MNCIIKTESEIKKMKVSGKIAAEVLEMIENYIKPNISTEEINNICHNFIIKKKAVSACLGYHGFPKSICISVNDVVCHGIPNKNQILKSGDIVNIDVTIIKKNYHADTSKMFLVGQTNILSQRLCKIAQESLYKSLNILKPGIPLYKIGEVIQNYVENNNFSVVKEYCGHGIGRAFHEEPYVLHYKNKSHVILEKGMIFTIEPMINAGSHEVKCMKDGWTVKTKDHSLSAQYEHTVLITENGCDILTWQKNEKIPSKFINK</sequence>
<proteinExistence type="inferred from homology"/>
<name>MAP1_BUCAP</name>
<organism>
    <name type="scientific">Buchnera aphidicola subsp. Schizaphis graminum (strain Sg)</name>
    <dbReference type="NCBI Taxonomy" id="198804"/>
    <lineage>
        <taxon>Bacteria</taxon>
        <taxon>Pseudomonadati</taxon>
        <taxon>Pseudomonadota</taxon>
        <taxon>Gammaproteobacteria</taxon>
        <taxon>Enterobacterales</taxon>
        <taxon>Erwiniaceae</taxon>
        <taxon>Buchnera</taxon>
    </lineage>
</organism>
<evidence type="ECO:0000255" key="1">
    <source>
        <dbReference type="HAMAP-Rule" id="MF_01974"/>
    </source>
</evidence>
<gene>
    <name evidence="1" type="primary">map</name>
    <name type="ordered locus">BUsg_224</name>
</gene>
<feature type="chain" id="PRO_0000148930" description="Methionine aminopeptidase">
    <location>
        <begin position="1"/>
        <end position="261"/>
    </location>
</feature>
<feature type="binding site" evidence="1">
    <location>
        <position position="78"/>
    </location>
    <ligand>
        <name>substrate</name>
    </ligand>
</feature>
<feature type="binding site" evidence="1">
    <location>
        <position position="96"/>
    </location>
    <ligand>
        <name>a divalent metal cation</name>
        <dbReference type="ChEBI" id="CHEBI:60240"/>
        <label>1</label>
    </ligand>
</feature>
<feature type="binding site" evidence="1">
    <location>
        <position position="107"/>
    </location>
    <ligand>
        <name>a divalent metal cation</name>
        <dbReference type="ChEBI" id="CHEBI:60240"/>
        <label>1</label>
    </ligand>
</feature>
<feature type="binding site" evidence="1">
    <location>
        <position position="107"/>
    </location>
    <ligand>
        <name>a divalent metal cation</name>
        <dbReference type="ChEBI" id="CHEBI:60240"/>
        <label>2</label>
        <note>catalytic</note>
    </ligand>
</feature>
<feature type="binding site" evidence="1">
    <location>
        <position position="170"/>
    </location>
    <ligand>
        <name>a divalent metal cation</name>
        <dbReference type="ChEBI" id="CHEBI:60240"/>
        <label>2</label>
        <note>catalytic</note>
    </ligand>
</feature>
<feature type="binding site" evidence="1">
    <location>
        <position position="177"/>
    </location>
    <ligand>
        <name>substrate</name>
    </ligand>
</feature>
<feature type="binding site" evidence="1">
    <location>
        <position position="202"/>
    </location>
    <ligand>
        <name>a divalent metal cation</name>
        <dbReference type="ChEBI" id="CHEBI:60240"/>
        <label>2</label>
        <note>catalytic</note>
    </ligand>
</feature>
<feature type="binding site" evidence="1">
    <location>
        <position position="233"/>
    </location>
    <ligand>
        <name>a divalent metal cation</name>
        <dbReference type="ChEBI" id="CHEBI:60240"/>
        <label>1</label>
    </ligand>
</feature>
<feature type="binding site" evidence="1">
    <location>
        <position position="233"/>
    </location>
    <ligand>
        <name>a divalent metal cation</name>
        <dbReference type="ChEBI" id="CHEBI:60240"/>
        <label>2</label>
        <note>catalytic</note>
    </ligand>
</feature>
<reference key="1">
    <citation type="journal article" date="2002" name="Science">
        <title>50 million years of genomic stasis in endosymbiotic bacteria.</title>
        <authorList>
            <person name="Tamas I."/>
            <person name="Klasson L."/>
            <person name="Canbaeck B."/>
            <person name="Naeslund A.K."/>
            <person name="Eriksson A.-S."/>
            <person name="Wernegreen J.J."/>
            <person name="Sandstroem J.P."/>
            <person name="Moran N.A."/>
            <person name="Andersson S.G.E."/>
        </authorList>
    </citation>
    <scope>NUCLEOTIDE SEQUENCE [LARGE SCALE GENOMIC DNA]</scope>
    <source>
        <strain>Sg</strain>
    </source>
</reference>